<protein>
    <recommendedName>
        <fullName evidence="1">7-cyano-7-deazaguanine synthase</fullName>
        <ecNumber evidence="1">6.3.4.20</ecNumber>
    </recommendedName>
    <alternativeName>
        <fullName evidence="1">7-cyano-7-carbaguanine synthase</fullName>
    </alternativeName>
    <alternativeName>
        <fullName evidence="1">PreQ(0) synthase</fullName>
    </alternativeName>
    <alternativeName>
        <fullName evidence="1">Queuosine biosynthesis protein QueC</fullName>
    </alternativeName>
</protein>
<organism>
    <name type="scientific">Legionella pneumophila (strain Corby)</name>
    <dbReference type="NCBI Taxonomy" id="400673"/>
    <lineage>
        <taxon>Bacteria</taxon>
        <taxon>Pseudomonadati</taxon>
        <taxon>Pseudomonadota</taxon>
        <taxon>Gammaproteobacteria</taxon>
        <taxon>Legionellales</taxon>
        <taxon>Legionellaceae</taxon>
        <taxon>Legionella</taxon>
    </lineage>
</organism>
<feature type="chain" id="PRO_1000069774" description="7-cyano-7-deazaguanine synthase">
    <location>
        <begin position="1"/>
        <end position="228"/>
    </location>
</feature>
<feature type="binding site" evidence="1">
    <location>
        <begin position="8"/>
        <end position="18"/>
    </location>
    <ligand>
        <name>ATP</name>
        <dbReference type="ChEBI" id="CHEBI:30616"/>
    </ligand>
</feature>
<feature type="binding site" evidence="1">
    <location>
        <position position="188"/>
    </location>
    <ligand>
        <name>Zn(2+)</name>
        <dbReference type="ChEBI" id="CHEBI:29105"/>
    </ligand>
</feature>
<feature type="binding site" evidence="1">
    <location>
        <position position="198"/>
    </location>
    <ligand>
        <name>Zn(2+)</name>
        <dbReference type="ChEBI" id="CHEBI:29105"/>
    </ligand>
</feature>
<feature type="binding site" evidence="1">
    <location>
        <position position="201"/>
    </location>
    <ligand>
        <name>Zn(2+)</name>
        <dbReference type="ChEBI" id="CHEBI:29105"/>
    </ligand>
</feature>
<feature type="binding site" evidence="1">
    <location>
        <position position="204"/>
    </location>
    <ligand>
        <name>Zn(2+)</name>
        <dbReference type="ChEBI" id="CHEBI:29105"/>
    </ligand>
</feature>
<evidence type="ECO:0000255" key="1">
    <source>
        <dbReference type="HAMAP-Rule" id="MF_01633"/>
    </source>
</evidence>
<reference key="1">
    <citation type="submission" date="2006-11" db="EMBL/GenBank/DDBJ databases">
        <title>Identification and characterization of a new conjugation/ type IVA secretion system (trb/tra) of L. pneumophila Corby localized on a mobile genomic island.</title>
        <authorList>
            <person name="Gloeckner G."/>
            <person name="Albert-Weissenberger C."/>
            <person name="Weinmann E."/>
            <person name="Jacobi S."/>
            <person name="Schunder E."/>
            <person name="Steinert M."/>
            <person name="Buchrieser C."/>
            <person name="Hacker J."/>
            <person name="Heuner K."/>
        </authorList>
    </citation>
    <scope>NUCLEOTIDE SEQUENCE [LARGE SCALE GENOMIC DNA]</scope>
    <source>
        <strain>Corby</strain>
    </source>
</reference>
<comment type="function">
    <text evidence="1">Catalyzes the ATP-dependent conversion of 7-carboxy-7-deazaguanine (CDG) to 7-cyano-7-deazaguanine (preQ(0)).</text>
</comment>
<comment type="catalytic activity">
    <reaction evidence="1">
        <text>7-carboxy-7-deazaguanine + NH4(+) + ATP = 7-cyano-7-deazaguanine + ADP + phosphate + H2O + H(+)</text>
        <dbReference type="Rhea" id="RHEA:27982"/>
        <dbReference type="ChEBI" id="CHEBI:15377"/>
        <dbReference type="ChEBI" id="CHEBI:15378"/>
        <dbReference type="ChEBI" id="CHEBI:28938"/>
        <dbReference type="ChEBI" id="CHEBI:30616"/>
        <dbReference type="ChEBI" id="CHEBI:43474"/>
        <dbReference type="ChEBI" id="CHEBI:45075"/>
        <dbReference type="ChEBI" id="CHEBI:61036"/>
        <dbReference type="ChEBI" id="CHEBI:456216"/>
        <dbReference type="EC" id="6.3.4.20"/>
    </reaction>
</comment>
<comment type="cofactor">
    <cofactor evidence="1">
        <name>Zn(2+)</name>
        <dbReference type="ChEBI" id="CHEBI:29105"/>
    </cofactor>
    <text evidence="1">Binds 1 zinc ion per subunit.</text>
</comment>
<comment type="pathway">
    <text evidence="1">Purine metabolism; 7-cyano-7-deazaguanine biosynthesis.</text>
</comment>
<comment type="similarity">
    <text evidence="1">Belongs to the QueC family.</text>
</comment>
<sequence>MKKAVVLLSGGLDSTTCLALAKSQGFACYALSFSYGQRHSAELCAATRIAKHMDAADHKIVTLDTALFGGSALTDASIEVPEFKESPEIPVTYVPARNTIFLAMALGYAESIGARDIFIGASSVDYSHYPDCRPEFIESFQSLANLATKAGIEGDRFTINAPLQYLSKVQTIQLGTELGVDYGLTVSCYQANEAGEACGQCDSCTFRKRGFKSAGVNDPTRYQKCVHI</sequence>
<accession>A5II59</accession>
<dbReference type="EC" id="6.3.4.20" evidence="1"/>
<dbReference type="EMBL" id="CP000675">
    <property type="protein sequence ID" value="ABQ57059.1"/>
    <property type="molecule type" value="Genomic_DNA"/>
</dbReference>
<dbReference type="RefSeq" id="WP_011947764.1">
    <property type="nucleotide sequence ID" value="NC_009494.2"/>
</dbReference>
<dbReference type="SMR" id="A5II59"/>
<dbReference type="KEGG" id="lpc:LPC_3172"/>
<dbReference type="HOGENOM" id="CLU_081854_1_0_6"/>
<dbReference type="UniPathway" id="UPA00391"/>
<dbReference type="GO" id="GO:0005524">
    <property type="term" value="F:ATP binding"/>
    <property type="evidence" value="ECO:0007669"/>
    <property type="project" value="UniProtKB-UniRule"/>
</dbReference>
<dbReference type="GO" id="GO:0016879">
    <property type="term" value="F:ligase activity, forming carbon-nitrogen bonds"/>
    <property type="evidence" value="ECO:0007669"/>
    <property type="project" value="UniProtKB-UniRule"/>
</dbReference>
<dbReference type="GO" id="GO:0008270">
    <property type="term" value="F:zinc ion binding"/>
    <property type="evidence" value="ECO:0007669"/>
    <property type="project" value="UniProtKB-UniRule"/>
</dbReference>
<dbReference type="GO" id="GO:0008616">
    <property type="term" value="P:queuosine biosynthetic process"/>
    <property type="evidence" value="ECO:0007669"/>
    <property type="project" value="UniProtKB-UniRule"/>
</dbReference>
<dbReference type="CDD" id="cd01995">
    <property type="entry name" value="QueC-like"/>
    <property type="match status" value="1"/>
</dbReference>
<dbReference type="Gene3D" id="3.40.50.620">
    <property type="entry name" value="HUPs"/>
    <property type="match status" value="1"/>
</dbReference>
<dbReference type="HAMAP" id="MF_01633">
    <property type="entry name" value="QueC"/>
    <property type="match status" value="1"/>
</dbReference>
<dbReference type="InterPro" id="IPR018317">
    <property type="entry name" value="QueC"/>
</dbReference>
<dbReference type="InterPro" id="IPR014729">
    <property type="entry name" value="Rossmann-like_a/b/a_fold"/>
</dbReference>
<dbReference type="NCBIfam" id="TIGR00364">
    <property type="entry name" value="7-cyano-7-deazaguanine synthase QueC"/>
    <property type="match status" value="1"/>
</dbReference>
<dbReference type="PANTHER" id="PTHR42914">
    <property type="entry name" value="7-CYANO-7-DEAZAGUANINE SYNTHASE"/>
    <property type="match status" value="1"/>
</dbReference>
<dbReference type="PANTHER" id="PTHR42914:SF1">
    <property type="entry name" value="7-CYANO-7-DEAZAGUANINE SYNTHASE"/>
    <property type="match status" value="1"/>
</dbReference>
<dbReference type="Pfam" id="PF06508">
    <property type="entry name" value="QueC"/>
    <property type="match status" value="1"/>
</dbReference>
<dbReference type="PIRSF" id="PIRSF006293">
    <property type="entry name" value="ExsB"/>
    <property type="match status" value="1"/>
</dbReference>
<dbReference type="SUPFAM" id="SSF52402">
    <property type="entry name" value="Adenine nucleotide alpha hydrolases-like"/>
    <property type="match status" value="1"/>
</dbReference>
<name>QUEC_LEGPC</name>
<gene>
    <name evidence="1" type="primary">queC</name>
    <name type="ordered locus">LPC_3172</name>
</gene>
<keyword id="KW-0067">ATP-binding</keyword>
<keyword id="KW-0436">Ligase</keyword>
<keyword id="KW-0479">Metal-binding</keyword>
<keyword id="KW-0547">Nucleotide-binding</keyword>
<keyword id="KW-0671">Queuosine biosynthesis</keyword>
<keyword id="KW-0862">Zinc</keyword>
<proteinExistence type="inferred from homology"/>